<keyword id="KW-1185">Reference proteome</keyword>
<keyword id="KW-0687">Ribonucleoprotein</keyword>
<keyword id="KW-0689">Ribosomal protein</keyword>
<keyword id="KW-0694">RNA-binding</keyword>
<keyword id="KW-0699">rRNA-binding</keyword>
<keyword id="KW-0820">tRNA-binding</keyword>
<reference key="1">
    <citation type="journal article" date="2002" name="Environ. Microbiol.">
        <title>Complete genome sequence and comparative analysis of the metabolically versatile Pseudomonas putida KT2440.</title>
        <authorList>
            <person name="Nelson K.E."/>
            <person name="Weinel C."/>
            <person name="Paulsen I.T."/>
            <person name="Dodson R.J."/>
            <person name="Hilbert H."/>
            <person name="Martins dos Santos V.A.P."/>
            <person name="Fouts D.E."/>
            <person name="Gill S.R."/>
            <person name="Pop M."/>
            <person name="Holmes M."/>
            <person name="Brinkac L.M."/>
            <person name="Beanan M.J."/>
            <person name="DeBoy R.T."/>
            <person name="Daugherty S.C."/>
            <person name="Kolonay J.F."/>
            <person name="Madupu R."/>
            <person name="Nelson W.C."/>
            <person name="White O."/>
            <person name="Peterson J.D."/>
            <person name="Khouri H.M."/>
            <person name="Hance I."/>
            <person name="Chris Lee P."/>
            <person name="Holtzapple E.K."/>
            <person name="Scanlan D."/>
            <person name="Tran K."/>
            <person name="Moazzez A."/>
            <person name="Utterback T.R."/>
            <person name="Rizzo M."/>
            <person name="Lee K."/>
            <person name="Kosack D."/>
            <person name="Moestl D."/>
            <person name="Wedler H."/>
            <person name="Lauber J."/>
            <person name="Stjepandic D."/>
            <person name="Hoheisel J."/>
            <person name="Straetz M."/>
            <person name="Heim S."/>
            <person name="Kiewitz C."/>
            <person name="Eisen J.A."/>
            <person name="Timmis K.N."/>
            <person name="Duesterhoeft A."/>
            <person name="Tuemmler B."/>
            <person name="Fraser C.M."/>
        </authorList>
    </citation>
    <scope>NUCLEOTIDE SEQUENCE [LARGE SCALE GENOMIC DNA]</scope>
    <source>
        <strain>ATCC 47054 / DSM 6125 / CFBP 8728 / NCIMB 11950 / KT2440</strain>
    </source>
</reference>
<organism>
    <name type="scientific">Pseudomonas putida (strain ATCC 47054 / DSM 6125 / CFBP 8728 / NCIMB 11950 / KT2440)</name>
    <dbReference type="NCBI Taxonomy" id="160488"/>
    <lineage>
        <taxon>Bacteria</taxon>
        <taxon>Pseudomonadati</taxon>
        <taxon>Pseudomonadota</taxon>
        <taxon>Gammaproteobacteria</taxon>
        <taxon>Pseudomonadales</taxon>
        <taxon>Pseudomonadaceae</taxon>
        <taxon>Pseudomonas</taxon>
    </lineage>
</organism>
<comment type="function">
    <text evidence="1">Binds 23S rRNA and is also seen to make contacts with the A and possibly P site tRNAs.</text>
</comment>
<comment type="subunit">
    <text evidence="1">Part of the 50S ribosomal subunit.</text>
</comment>
<comment type="similarity">
    <text evidence="1">Belongs to the universal ribosomal protein uL16 family.</text>
</comment>
<proteinExistence type="inferred from homology"/>
<protein>
    <recommendedName>
        <fullName evidence="1">Large ribosomal subunit protein uL16</fullName>
    </recommendedName>
    <alternativeName>
        <fullName evidence="2">50S ribosomal protein L16</fullName>
    </alternativeName>
</protein>
<feature type="chain" id="PRO_0000062175" description="Large ribosomal subunit protein uL16">
    <location>
        <begin position="1"/>
        <end position="137"/>
    </location>
</feature>
<accession>Q88QM8</accession>
<sequence length="137" mass="15373">MLQPKRTKFRKQMTGHNRGLALRGSKVSFGEFALKAVARGRLTARQIESARRALTRHVKRGGKIWIRVFPDKPISKKPLEVRMGKGKGSVEYWVAQIQPGKVLYEIEGVSEELAREAFALAAAKLPLATSFVKRTVM</sequence>
<gene>
    <name evidence="1" type="primary">rplP</name>
    <name type="ordered locus">PP_0461</name>
</gene>
<dbReference type="EMBL" id="AE015451">
    <property type="protein sequence ID" value="AAN66091.1"/>
    <property type="molecule type" value="Genomic_DNA"/>
</dbReference>
<dbReference type="RefSeq" id="NP_742627.1">
    <property type="nucleotide sequence ID" value="NC_002947.4"/>
</dbReference>
<dbReference type="RefSeq" id="WP_003255479.1">
    <property type="nucleotide sequence ID" value="NZ_CP169744.1"/>
</dbReference>
<dbReference type="SMR" id="Q88QM8"/>
<dbReference type="STRING" id="160488.PP_0461"/>
<dbReference type="PaxDb" id="160488-PP_0461"/>
<dbReference type="GeneID" id="98285431"/>
<dbReference type="KEGG" id="ppu:PP_0461"/>
<dbReference type="PATRIC" id="fig|160488.4.peg.493"/>
<dbReference type="eggNOG" id="COG0197">
    <property type="taxonomic scope" value="Bacteria"/>
</dbReference>
<dbReference type="HOGENOM" id="CLU_078858_2_1_6"/>
<dbReference type="OrthoDB" id="9802589at2"/>
<dbReference type="PhylomeDB" id="Q88QM8"/>
<dbReference type="BioCyc" id="PPUT160488:G1G01-507-MONOMER"/>
<dbReference type="Proteomes" id="UP000000556">
    <property type="component" value="Chromosome"/>
</dbReference>
<dbReference type="GO" id="GO:0022625">
    <property type="term" value="C:cytosolic large ribosomal subunit"/>
    <property type="evidence" value="ECO:0007669"/>
    <property type="project" value="TreeGrafter"/>
</dbReference>
<dbReference type="GO" id="GO:0019843">
    <property type="term" value="F:rRNA binding"/>
    <property type="evidence" value="ECO:0007669"/>
    <property type="project" value="UniProtKB-UniRule"/>
</dbReference>
<dbReference type="GO" id="GO:0003735">
    <property type="term" value="F:structural constituent of ribosome"/>
    <property type="evidence" value="ECO:0007669"/>
    <property type="project" value="InterPro"/>
</dbReference>
<dbReference type="GO" id="GO:0000049">
    <property type="term" value="F:tRNA binding"/>
    <property type="evidence" value="ECO:0007669"/>
    <property type="project" value="UniProtKB-KW"/>
</dbReference>
<dbReference type="GO" id="GO:0006412">
    <property type="term" value="P:translation"/>
    <property type="evidence" value="ECO:0007669"/>
    <property type="project" value="UniProtKB-UniRule"/>
</dbReference>
<dbReference type="CDD" id="cd01433">
    <property type="entry name" value="Ribosomal_L16_L10e"/>
    <property type="match status" value="1"/>
</dbReference>
<dbReference type="FunFam" id="3.90.1170.10:FF:000001">
    <property type="entry name" value="50S ribosomal protein L16"/>
    <property type="match status" value="1"/>
</dbReference>
<dbReference type="Gene3D" id="3.90.1170.10">
    <property type="entry name" value="Ribosomal protein L10e/L16"/>
    <property type="match status" value="1"/>
</dbReference>
<dbReference type="HAMAP" id="MF_01342">
    <property type="entry name" value="Ribosomal_uL16"/>
    <property type="match status" value="1"/>
</dbReference>
<dbReference type="InterPro" id="IPR047873">
    <property type="entry name" value="Ribosomal_uL16"/>
</dbReference>
<dbReference type="InterPro" id="IPR000114">
    <property type="entry name" value="Ribosomal_uL16_bact-type"/>
</dbReference>
<dbReference type="InterPro" id="IPR020798">
    <property type="entry name" value="Ribosomal_uL16_CS"/>
</dbReference>
<dbReference type="InterPro" id="IPR016180">
    <property type="entry name" value="Ribosomal_uL16_dom"/>
</dbReference>
<dbReference type="InterPro" id="IPR036920">
    <property type="entry name" value="Ribosomal_uL16_sf"/>
</dbReference>
<dbReference type="NCBIfam" id="TIGR01164">
    <property type="entry name" value="rplP_bact"/>
    <property type="match status" value="1"/>
</dbReference>
<dbReference type="PANTHER" id="PTHR12220">
    <property type="entry name" value="50S/60S RIBOSOMAL PROTEIN L16"/>
    <property type="match status" value="1"/>
</dbReference>
<dbReference type="PANTHER" id="PTHR12220:SF13">
    <property type="entry name" value="LARGE RIBOSOMAL SUBUNIT PROTEIN UL16M"/>
    <property type="match status" value="1"/>
</dbReference>
<dbReference type="Pfam" id="PF00252">
    <property type="entry name" value="Ribosomal_L16"/>
    <property type="match status" value="1"/>
</dbReference>
<dbReference type="PRINTS" id="PR00060">
    <property type="entry name" value="RIBOSOMALL16"/>
</dbReference>
<dbReference type="SUPFAM" id="SSF54686">
    <property type="entry name" value="Ribosomal protein L16p/L10e"/>
    <property type="match status" value="1"/>
</dbReference>
<dbReference type="PROSITE" id="PS00586">
    <property type="entry name" value="RIBOSOMAL_L16_1"/>
    <property type="match status" value="1"/>
</dbReference>
<dbReference type="PROSITE" id="PS00701">
    <property type="entry name" value="RIBOSOMAL_L16_2"/>
    <property type="match status" value="1"/>
</dbReference>
<name>RL16_PSEPK</name>
<evidence type="ECO:0000255" key="1">
    <source>
        <dbReference type="HAMAP-Rule" id="MF_01342"/>
    </source>
</evidence>
<evidence type="ECO:0000305" key="2"/>